<reference key="1">
    <citation type="journal article" date="2003" name="Science">
        <title>Genome of Geobacter sulfurreducens: metal reduction in subsurface environments.</title>
        <authorList>
            <person name="Methe B.A."/>
            <person name="Nelson K.E."/>
            <person name="Eisen J.A."/>
            <person name="Paulsen I.T."/>
            <person name="Nelson W.C."/>
            <person name="Heidelberg J.F."/>
            <person name="Wu D."/>
            <person name="Wu M."/>
            <person name="Ward N.L."/>
            <person name="Beanan M.J."/>
            <person name="Dodson R.J."/>
            <person name="Madupu R."/>
            <person name="Brinkac L.M."/>
            <person name="Daugherty S.C."/>
            <person name="DeBoy R.T."/>
            <person name="Durkin A.S."/>
            <person name="Gwinn M.L."/>
            <person name="Kolonay J.F."/>
            <person name="Sullivan S.A."/>
            <person name="Haft D.H."/>
            <person name="Selengut J."/>
            <person name="Davidsen T.M."/>
            <person name="Zafar N."/>
            <person name="White O."/>
            <person name="Tran B."/>
            <person name="Romero C."/>
            <person name="Forberger H.A."/>
            <person name="Weidman J.F."/>
            <person name="Khouri H.M."/>
            <person name="Feldblyum T.V."/>
            <person name="Utterback T.R."/>
            <person name="Van Aken S.E."/>
            <person name="Lovley D.R."/>
            <person name="Fraser C.M."/>
        </authorList>
    </citation>
    <scope>NUCLEOTIDE SEQUENCE [LARGE SCALE GENOMIC DNA]</scope>
    <source>
        <strain>ATCC 51573 / DSM 12127 / PCA</strain>
    </source>
</reference>
<proteinExistence type="inferred from homology"/>
<keyword id="KW-1185">Reference proteome</keyword>
<keyword id="KW-0687">Ribonucleoprotein</keyword>
<keyword id="KW-0689">Ribosomal protein</keyword>
<keyword id="KW-0694">RNA-binding</keyword>
<keyword id="KW-0699">rRNA-binding</keyword>
<feature type="chain" id="PRO_0000260874" description="Large ribosomal subunit protein uL6">
    <location>
        <begin position="1"/>
        <end position="179"/>
    </location>
</feature>
<sequence>MSRIGKRPIEIPSGVKVEFSDSVLTIEGPKGKLSRQVMDGVSLEITPSSIEVKRADDGLKARSAHGLTRTLVNNMVVGVTKGFERALEINGVGYRAEAKGDVLNLSLGYSHPINYALPAGIIVEVDKMTKLVVKGIDKELVGQTAAKIRSFRGPEPYKGKGIKYADEKILRKAGKTGKK</sequence>
<protein>
    <recommendedName>
        <fullName evidence="1">Large ribosomal subunit protein uL6</fullName>
    </recommendedName>
    <alternativeName>
        <fullName evidence="2">50S ribosomal protein L6</fullName>
    </alternativeName>
</protein>
<organism>
    <name type="scientific">Geobacter sulfurreducens (strain ATCC 51573 / DSM 12127 / PCA)</name>
    <dbReference type="NCBI Taxonomy" id="243231"/>
    <lineage>
        <taxon>Bacteria</taxon>
        <taxon>Pseudomonadati</taxon>
        <taxon>Thermodesulfobacteriota</taxon>
        <taxon>Desulfuromonadia</taxon>
        <taxon>Geobacterales</taxon>
        <taxon>Geobacteraceae</taxon>
        <taxon>Geobacter</taxon>
    </lineage>
</organism>
<evidence type="ECO:0000255" key="1">
    <source>
        <dbReference type="HAMAP-Rule" id="MF_01365"/>
    </source>
</evidence>
<evidence type="ECO:0000305" key="2"/>
<dbReference type="EMBL" id="AE017180">
    <property type="protein sequence ID" value="AAR36235.1"/>
    <property type="molecule type" value="Genomic_DNA"/>
</dbReference>
<dbReference type="RefSeq" id="NP_953885.1">
    <property type="nucleotide sequence ID" value="NC_002939.5"/>
</dbReference>
<dbReference type="RefSeq" id="WP_010943471.1">
    <property type="nucleotide sequence ID" value="NC_002939.5"/>
</dbReference>
<dbReference type="SMR" id="Q749A2"/>
<dbReference type="FunCoup" id="Q749A2">
    <property type="interactions" value="663"/>
</dbReference>
<dbReference type="STRING" id="243231.GSU2842"/>
<dbReference type="EnsemblBacteria" id="AAR36235">
    <property type="protein sequence ID" value="AAR36235"/>
    <property type="gene ID" value="GSU2842"/>
</dbReference>
<dbReference type="KEGG" id="gsu:GSU2842"/>
<dbReference type="PATRIC" id="fig|243231.5.peg.2868"/>
<dbReference type="eggNOG" id="COG0097">
    <property type="taxonomic scope" value="Bacteria"/>
</dbReference>
<dbReference type="HOGENOM" id="CLU_065464_1_2_7"/>
<dbReference type="InParanoid" id="Q749A2"/>
<dbReference type="OrthoDB" id="9805007at2"/>
<dbReference type="Proteomes" id="UP000000577">
    <property type="component" value="Chromosome"/>
</dbReference>
<dbReference type="GO" id="GO:0022625">
    <property type="term" value="C:cytosolic large ribosomal subunit"/>
    <property type="evidence" value="ECO:0000318"/>
    <property type="project" value="GO_Central"/>
</dbReference>
<dbReference type="GO" id="GO:0019843">
    <property type="term" value="F:rRNA binding"/>
    <property type="evidence" value="ECO:0007669"/>
    <property type="project" value="UniProtKB-UniRule"/>
</dbReference>
<dbReference type="GO" id="GO:0003735">
    <property type="term" value="F:structural constituent of ribosome"/>
    <property type="evidence" value="ECO:0000318"/>
    <property type="project" value="GO_Central"/>
</dbReference>
<dbReference type="GO" id="GO:0002181">
    <property type="term" value="P:cytoplasmic translation"/>
    <property type="evidence" value="ECO:0000318"/>
    <property type="project" value="GO_Central"/>
</dbReference>
<dbReference type="FunFam" id="3.90.930.12:FF:000001">
    <property type="entry name" value="50S ribosomal protein L6"/>
    <property type="match status" value="1"/>
</dbReference>
<dbReference type="FunFam" id="3.90.930.12:FF:000002">
    <property type="entry name" value="50S ribosomal protein L6"/>
    <property type="match status" value="1"/>
</dbReference>
<dbReference type="Gene3D" id="3.90.930.12">
    <property type="entry name" value="Ribosomal protein L6, alpha-beta domain"/>
    <property type="match status" value="2"/>
</dbReference>
<dbReference type="HAMAP" id="MF_01365_B">
    <property type="entry name" value="Ribosomal_uL6_B"/>
    <property type="match status" value="1"/>
</dbReference>
<dbReference type="InterPro" id="IPR000702">
    <property type="entry name" value="Ribosomal_uL6-like"/>
</dbReference>
<dbReference type="InterPro" id="IPR036789">
    <property type="entry name" value="Ribosomal_uL6-like_a/b-dom_sf"/>
</dbReference>
<dbReference type="InterPro" id="IPR020040">
    <property type="entry name" value="Ribosomal_uL6_a/b-dom"/>
</dbReference>
<dbReference type="InterPro" id="IPR019906">
    <property type="entry name" value="Ribosomal_uL6_bac-type"/>
</dbReference>
<dbReference type="InterPro" id="IPR002358">
    <property type="entry name" value="Ribosomal_uL6_CS"/>
</dbReference>
<dbReference type="NCBIfam" id="TIGR03654">
    <property type="entry name" value="L6_bact"/>
    <property type="match status" value="1"/>
</dbReference>
<dbReference type="PANTHER" id="PTHR11655">
    <property type="entry name" value="60S/50S RIBOSOMAL PROTEIN L6/L9"/>
    <property type="match status" value="1"/>
</dbReference>
<dbReference type="PANTHER" id="PTHR11655:SF14">
    <property type="entry name" value="LARGE RIBOSOMAL SUBUNIT PROTEIN UL6M"/>
    <property type="match status" value="1"/>
</dbReference>
<dbReference type="Pfam" id="PF00347">
    <property type="entry name" value="Ribosomal_L6"/>
    <property type="match status" value="2"/>
</dbReference>
<dbReference type="PIRSF" id="PIRSF002162">
    <property type="entry name" value="Ribosomal_L6"/>
    <property type="match status" value="1"/>
</dbReference>
<dbReference type="PRINTS" id="PR00059">
    <property type="entry name" value="RIBOSOMALL6"/>
</dbReference>
<dbReference type="SUPFAM" id="SSF56053">
    <property type="entry name" value="Ribosomal protein L6"/>
    <property type="match status" value="2"/>
</dbReference>
<dbReference type="PROSITE" id="PS00525">
    <property type="entry name" value="RIBOSOMAL_L6_1"/>
    <property type="match status" value="1"/>
</dbReference>
<name>RL6_GEOSL</name>
<accession>Q749A2</accession>
<comment type="function">
    <text evidence="1">This protein binds to the 23S rRNA, and is important in its secondary structure. It is located near the subunit interface in the base of the L7/L12 stalk, and near the tRNA binding site of the peptidyltransferase center.</text>
</comment>
<comment type="subunit">
    <text evidence="1">Part of the 50S ribosomal subunit.</text>
</comment>
<comment type="similarity">
    <text evidence="1">Belongs to the universal ribosomal protein uL6 family.</text>
</comment>
<gene>
    <name evidence="1" type="primary">rplF</name>
    <name type="ordered locus">GSU2842</name>
</gene>